<feature type="chain" id="PRO_0000450272" description="Aminoglycoside 6-adenylyltransferase">
    <location>
        <begin position="1"/>
        <end position="288"/>
    </location>
</feature>
<keyword id="KW-0046">Antibiotic resistance</keyword>
<keyword id="KW-0548">Nucleotidyltransferase</keyword>
<keyword id="KW-0614">Plasmid</keyword>
<keyword id="KW-0808">Transferase</keyword>
<name>AADK_CAMJU</name>
<geneLocation type="plasmid">
    <name>pCG8245</name>
</geneLocation>
<gene>
    <name evidence="4" type="primary">aadK</name>
    <name evidence="3" type="synonym">aadE</name>
    <name evidence="4" type="synonym">ant(6)</name>
    <name type="ORF">C9J79_09595</name>
</gene>
<sequence length="288" mass="34552">MRSEKEVYDIVLNFAKTDKRIRMVTLEGSRTNTNIPPDDFQDFDITFFVTDMDSFTSDDKWLDIFGERLILQKPEDMELFPAVEKGFSYLMLFTDDVKIDLTLLPLELIDEYFTWDKLVKLLLDKDNRIVKPPIPTDIDYHLQKPTQRMFDDCCNEFWNTTTYVVKGLCRKEILFAIDHMNDIVRKELLRMISWLIGIKQGFHFSLGKNYKFMKQYVPEELWERLMSTYNMDSYPHMWESFEQCMALFREVSSEVACQLDYQYPLYDEKISNYVIRQKKKYGIEDDNK</sequence>
<dbReference type="EC" id="2.7.7.-" evidence="5"/>
<dbReference type="EMBL" id="AY701528">
    <property type="protein sequence ID" value="AAW34139.1"/>
    <property type="molecule type" value="Genomic_DNA"/>
</dbReference>
<dbReference type="EMBL" id="KF864551">
    <property type="protein sequence ID" value="AIJ27543.1"/>
    <property type="molecule type" value="Genomic_DNA"/>
</dbReference>
<dbReference type="RefSeq" id="WP_001255868.1">
    <property type="nucleotide sequence ID" value="NZ_VOEN01000013.1"/>
</dbReference>
<dbReference type="SMR" id="P0DTV9"/>
<dbReference type="GO" id="GO:0016779">
    <property type="term" value="F:nucleotidyltransferase activity"/>
    <property type="evidence" value="ECO:0007669"/>
    <property type="project" value="UniProtKB-KW"/>
</dbReference>
<dbReference type="GO" id="GO:0046677">
    <property type="term" value="P:response to antibiotic"/>
    <property type="evidence" value="ECO:0000315"/>
    <property type="project" value="UniProtKB"/>
</dbReference>
<dbReference type="Gene3D" id="3.30.460.10">
    <property type="entry name" value="Beta Polymerase, domain 2"/>
    <property type="match status" value="1"/>
</dbReference>
<dbReference type="Gene3D" id="1.20.120.330">
    <property type="entry name" value="Nucleotidyltransferases domain 2"/>
    <property type="match status" value="1"/>
</dbReference>
<dbReference type="InterPro" id="IPR007530">
    <property type="entry name" value="Aminoglycoside_adenylylTfrase"/>
</dbReference>
<dbReference type="InterPro" id="IPR043519">
    <property type="entry name" value="NT_sf"/>
</dbReference>
<dbReference type="NCBIfam" id="NF033084">
    <property type="entry name" value="ANT_6"/>
    <property type="match status" value="1"/>
</dbReference>
<dbReference type="Pfam" id="PF04439">
    <property type="entry name" value="Adenyl_transf"/>
    <property type="match status" value="1"/>
</dbReference>
<dbReference type="PIRSF" id="PIRSF000812">
    <property type="entry name" value="AAD"/>
    <property type="match status" value="1"/>
</dbReference>
<dbReference type="SUPFAM" id="SSF81301">
    <property type="entry name" value="Nucleotidyltransferase"/>
    <property type="match status" value="1"/>
</dbReference>
<dbReference type="SUPFAM" id="SSF81631">
    <property type="entry name" value="PAP/OAS1 substrate-binding domain"/>
    <property type="match status" value="1"/>
</dbReference>
<organism>
    <name type="scientific">Campylobacter jejuni</name>
    <dbReference type="NCBI Taxonomy" id="197"/>
    <lineage>
        <taxon>Bacteria</taxon>
        <taxon>Pseudomonadati</taxon>
        <taxon>Campylobacterota</taxon>
        <taxon>Epsilonproteobacteria</taxon>
        <taxon>Campylobacterales</taxon>
        <taxon>Campylobacteraceae</taxon>
        <taxon>Campylobacter</taxon>
    </lineage>
</organism>
<protein>
    <recommendedName>
        <fullName evidence="3">Aminoglycoside 6-adenylyltransferase</fullName>
        <ecNumber evidence="5">2.7.7.-</ecNumber>
    </recommendedName>
    <alternativeName>
        <fullName evidence="3">ORF2</fullName>
    </alternativeName>
    <alternativeName>
        <fullName evidence="3">Streptomycin 6-adenylyltransferase</fullName>
    </alternativeName>
</protein>
<accession>P0DTV9</accession>
<evidence type="ECO:0000269" key="1">
    <source>
    </source>
</evidence>
<evidence type="ECO:0000269" key="2">
    <source>
    </source>
</evidence>
<evidence type="ECO:0000303" key="3">
    <source>
    </source>
</evidence>
<evidence type="ECO:0000305" key="4"/>
<evidence type="ECO:0000305" key="5">
    <source>
    </source>
</evidence>
<evidence type="ECO:0000305" key="6">
    <source>
    </source>
</evidence>
<comment type="function">
    <text evidence="1 6">Mediates bacterial resistance to streptomycin, is probably a streptomycin 6-adenylyltransferase.</text>
</comment>
<comment type="catalytic activity">
    <reaction evidence="5">
        <text>streptomycin + ATP = 6-O-adenylylstreptomycin + diphosphate</text>
        <dbReference type="Rhea" id="RHEA:63236"/>
        <dbReference type="ChEBI" id="CHEBI:30616"/>
        <dbReference type="ChEBI" id="CHEBI:33019"/>
        <dbReference type="ChEBI" id="CHEBI:58007"/>
        <dbReference type="ChEBI" id="CHEBI:146262"/>
    </reaction>
</comment>
<comment type="disruption phenotype">
    <text evidence="1">Loss of streptomycin resistance.</text>
</comment>
<comment type="miscellaneous">
    <text evidence="2">In strain C179b a 10242 bp segment of DNA has been inserted into the chromosome between cj0168c and sodB. This piece of DNA forms a multidrug resistance genomic island and is transferable among C.jejuni strains.</text>
</comment>
<reference key="1">
    <citation type="journal article" date="2005" name="Antimicrob. Agents Chemother.">
        <title>Mosaic structure of a multiple-drug-resistant, conjugative plasmid from Campylobacter jejuni.</title>
        <authorList>
            <person name="Nirdnoy W."/>
            <person name="Mason C.J."/>
            <person name="Guerry P."/>
        </authorList>
    </citation>
    <scope>NUCLEOTIDE SEQUENCE [GENOMIC DNA]</scope>
    <scope>DISRUPTION PHENOTYPE</scope>
    <source>
        <strain>CG8245 / Serotype Lior 19</strain>
        <plasmid>pCG8245</plasmid>
    </source>
</reference>
<reference key="2">
    <citation type="journal article" date="2015" name="J. Antimicrob. Chemother.">
        <title>Characterization of the genetic environment of the ribosomal RNA methylase gene erm(B) in Campylobacter jejuni.</title>
        <authorList>
            <person name="Deng F."/>
            <person name="Wang Y."/>
            <person name="Zhang Y."/>
            <person name="Shen Z."/>
        </authorList>
    </citation>
    <scope>NUCLEOTIDE SEQUENCE [GENOMIC DNA]</scope>
    <scope>FUNCTION</scope>
    <source>
        <strain>C179b</strain>
    </source>
</reference>
<proteinExistence type="predicted"/>